<gene>
    <name type="ordered locus">jhp_1324</name>
</gene>
<sequence length="329" mass="35948">MPILFDCNATAIQVLRDEASALLESVKQFQEPNDLEAIVKLILKSQEKGGKLVIVGVGKSALVAQKIVASMLSTGNRSAFLHPTEAMHGDLGMVEKNDVILMISYGGESLELLNLVSHLKRLSHKIITFTKSPTSSLSKLGDYYLSLKIKKEACPINTAPTTSTTLTLALGDVLMACLMRAKNFSQEDFASFHPGGLLGKKLFVKVKDLLQTTNLPLIAPSTSFKDALIEMSEKRLGSAILVNDNNELVGVLSDGDVRRALLKGLSLESEVKHFATLKPKSFKNLDALLLEALEFLERHKIQLLVCVDDRNKVLGVLHLHQLLELGLKA</sequence>
<feature type="chain" id="PRO_0000136588" description="Uncharacterized protein jhp_1324">
    <location>
        <begin position="1"/>
        <end position="329"/>
    </location>
</feature>
<feature type="domain" description="SIS" evidence="3">
    <location>
        <begin position="38"/>
        <end position="184"/>
    </location>
</feature>
<feature type="domain" description="CBS 1" evidence="2">
    <location>
        <begin position="211"/>
        <end position="267"/>
    </location>
</feature>
<feature type="domain" description="CBS 2" evidence="2">
    <location>
        <begin position="276"/>
        <end position="329"/>
    </location>
</feature>
<feature type="binding site" evidence="1">
    <location>
        <begin position="56"/>
        <end position="61"/>
    </location>
    <ligand>
        <name>ATP</name>
        <dbReference type="ChEBI" id="CHEBI:30616"/>
    </ligand>
</feature>
<organism>
    <name type="scientific">Helicobacter pylori (strain J99 / ATCC 700824)</name>
    <name type="common">Campylobacter pylori J99</name>
    <dbReference type="NCBI Taxonomy" id="85963"/>
    <lineage>
        <taxon>Bacteria</taxon>
        <taxon>Pseudomonadati</taxon>
        <taxon>Campylobacterota</taxon>
        <taxon>Epsilonproteobacteria</taxon>
        <taxon>Campylobacterales</taxon>
        <taxon>Helicobacteraceae</taxon>
        <taxon>Helicobacter</taxon>
    </lineage>
</organism>
<comment type="similarity">
    <text evidence="4">Belongs to the SIS family. GutQ/KpsF subfamily.</text>
</comment>
<reference key="1">
    <citation type="journal article" date="1999" name="Nature">
        <title>Genomic sequence comparison of two unrelated isolates of the human gastric pathogen Helicobacter pylori.</title>
        <authorList>
            <person name="Alm R.A."/>
            <person name="Ling L.-S.L."/>
            <person name="Moir D.T."/>
            <person name="King B.L."/>
            <person name="Brown E.D."/>
            <person name="Doig P.C."/>
            <person name="Smith D.R."/>
            <person name="Noonan B."/>
            <person name="Guild B.C."/>
            <person name="deJonge B.L."/>
            <person name="Carmel G."/>
            <person name="Tummino P.J."/>
            <person name="Caruso A."/>
            <person name="Uria-Nickelsen M."/>
            <person name="Mills D.M."/>
            <person name="Ives C."/>
            <person name="Gibson R."/>
            <person name="Merberg D."/>
            <person name="Mills S.D."/>
            <person name="Jiang Q."/>
            <person name="Taylor D.E."/>
            <person name="Vovis G.F."/>
            <person name="Trust T.J."/>
        </authorList>
    </citation>
    <scope>NUCLEOTIDE SEQUENCE [LARGE SCALE GENOMIC DNA]</scope>
    <source>
        <strain>J99 / ATCC 700824</strain>
    </source>
</reference>
<keyword id="KW-0067">ATP-binding</keyword>
<keyword id="KW-0129">CBS domain</keyword>
<keyword id="KW-0547">Nucleotide-binding</keyword>
<keyword id="KW-0677">Repeat</keyword>
<accession>Q9ZJI5</accession>
<proteinExistence type="inferred from homology"/>
<protein>
    <recommendedName>
        <fullName>Uncharacterized protein jhp_1324</fullName>
    </recommendedName>
</protein>
<dbReference type="EMBL" id="AE001439">
    <property type="protein sequence ID" value="AAD06900.1"/>
    <property type="molecule type" value="Genomic_DNA"/>
</dbReference>
<dbReference type="PIR" id="G71821">
    <property type="entry name" value="G71821"/>
</dbReference>
<dbReference type="RefSeq" id="WP_001121965.1">
    <property type="nucleotide sequence ID" value="NC_000921.1"/>
</dbReference>
<dbReference type="SMR" id="Q9ZJI5"/>
<dbReference type="KEGG" id="hpj:jhp_1324"/>
<dbReference type="PATRIC" id="fig|85963.30.peg.1236"/>
<dbReference type="eggNOG" id="COG0517">
    <property type="taxonomic scope" value="Bacteria"/>
</dbReference>
<dbReference type="eggNOG" id="COG0794">
    <property type="taxonomic scope" value="Bacteria"/>
</dbReference>
<dbReference type="Proteomes" id="UP000000804">
    <property type="component" value="Chromosome"/>
</dbReference>
<dbReference type="GO" id="GO:0005524">
    <property type="term" value="F:ATP binding"/>
    <property type="evidence" value="ECO:0007669"/>
    <property type="project" value="UniProtKB-KW"/>
</dbReference>
<dbReference type="GO" id="GO:0016853">
    <property type="term" value="F:isomerase activity"/>
    <property type="evidence" value="ECO:0007669"/>
    <property type="project" value="InterPro"/>
</dbReference>
<dbReference type="GO" id="GO:1901135">
    <property type="term" value="P:carbohydrate derivative metabolic process"/>
    <property type="evidence" value="ECO:0007669"/>
    <property type="project" value="InterPro"/>
</dbReference>
<dbReference type="GO" id="GO:0005975">
    <property type="term" value="P:carbohydrate metabolic process"/>
    <property type="evidence" value="ECO:0007669"/>
    <property type="project" value="InterPro"/>
</dbReference>
<dbReference type="CDD" id="cd05014">
    <property type="entry name" value="SIS_Kpsf"/>
    <property type="match status" value="1"/>
</dbReference>
<dbReference type="FunFam" id="3.40.50.10490:FF:000011">
    <property type="entry name" value="Arabinose 5-phosphate isomerase"/>
    <property type="match status" value="1"/>
</dbReference>
<dbReference type="Gene3D" id="3.10.580.10">
    <property type="entry name" value="CBS-domain"/>
    <property type="match status" value="1"/>
</dbReference>
<dbReference type="Gene3D" id="3.40.50.10490">
    <property type="entry name" value="Glucose-6-phosphate isomerase like protein, domain 1"/>
    <property type="match status" value="1"/>
</dbReference>
<dbReference type="InterPro" id="IPR000644">
    <property type="entry name" value="CBS_dom"/>
</dbReference>
<dbReference type="InterPro" id="IPR046342">
    <property type="entry name" value="CBS_dom_sf"/>
</dbReference>
<dbReference type="InterPro" id="IPR050986">
    <property type="entry name" value="GutQ/KpsF_isomerases"/>
</dbReference>
<dbReference type="InterPro" id="IPR004800">
    <property type="entry name" value="KdsD/KpsF-type"/>
</dbReference>
<dbReference type="InterPro" id="IPR001347">
    <property type="entry name" value="SIS_dom"/>
</dbReference>
<dbReference type="InterPro" id="IPR046348">
    <property type="entry name" value="SIS_dom_sf"/>
</dbReference>
<dbReference type="InterPro" id="IPR035474">
    <property type="entry name" value="SIS_Kpsf"/>
</dbReference>
<dbReference type="NCBIfam" id="TIGR00393">
    <property type="entry name" value="kpsF"/>
    <property type="match status" value="1"/>
</dbReference>
<dbReference type="PANTHER" id="PTHR42745">
    <property type="match status" value="1"/>
</dbReference>
<dbReference type="PANTHER" id="PTHR42745:SF1">
    <property type="entry name" value="ARABINOSE 5-PHOSPHATE ISOMERASE KDSD"/>
    <property type="match status" value="1"/>
</dbReference>
<dbReference type="Pfam" id="PF00571">
    <property type="entry name" value="CBS"/>
    <property type="match status" value="2"/>
</dbReference>
<dbReference type="Pfam" id="PF01380">
    <property type="entry name" value="SIS"/>
    <property type="match status" value="1"/>
</dbReference>
<dbReference type="PIRSF" id="PIRSF004692">
    <property type="entry name" value="KdsD_KpsF"/>
    <property type="match status" value="1"/>
</dbReference>
<dbReference type="SMART" id="SM00116">
    <property type="entry name" value="CBS"/>
    <property type="match status" value="1"/>
</dbReference>
<dbReference type="SUPFAM" id="SSF53697">
    <property type="entry name" value="SIS domain"/>
    <property type="match status" value="1"/>
</dbReference>
<dbReference type="PROSITE" id="PS51371">
    <property type="entry name" value="CBS"/>
    <property type="match status" value="2"/>
</dbReference>
<dbReference type="PROSITE" id="PS51464">
    <property type="entry name" value="SIS"/>
    <property type="match status" value="1"/>
</dbReference>
<name>YE29_HELPJ</name>
<evidence type="ECO:0000255" key="1"/>
<evidence type="ECO:0000255" key="2">
    <source>
        <dbReference type="PROSITE-ProRule" id="PRU00703"/>
    </source>
</evidence>
<evidence type="ECO:0000255" key="3">
    <source>
        <dbReference type="PROSITE-ProRule" id="PRU00797"/>
    </source>
</evidence>
<evidence type="ECO:0000305" key="4"/>